<protein>
    <recommendedName>
        <fullName evidence="7">Omega-lycotoxin-Am1b</fullName>
        <shortName evidence="7">Omega-LCTX-Am1b</shortName>
    </recommendedName>
    <alternativeName>
        <fullName evidence="6 7">Omega-Lsp-IA-like 1</fullName>
    </alternativeName>
    <alternativeName>
        <fullName evidence="7">Omega-lycotoxin-Gsp(267)1b</fullName>
        <shortName evidence="7">Omega-LCTX-Gsp(267)1b</shortName>
    </alternativeName>
</protein>
<accession>A9XDG0</accession>
<keyword id="KW-0108">Calcium channel impairing toxin</keyword>
<keyword id="KW-1015">Disulfide bond</keyword>
<keyword id="KW-0872">Ion channel impairing toxin</keyword>
<keyword id="KW-0960">Knottin</keyword>
<keyword id="KW-0528">Neurotoxin</keyword>
<keyword id="KW-0964">Secreted</keyword>
<keyword id="KW-0732">Signal</keyword>
<keyword id="KW-0800">Toxin</keyword>
<keyword id="KW-1218">Voltage-gated calcium channel impairing toxin</keyword>
<comment type="function">
    <text evidence="3 4">Modulates Cav2.1/CACNA1A voltage-gated calcium channels (P/Q-type currents) in rat cerebellar Purkinje cells and hippocampal CA1-CA3 neurons (By similarity). At saturating concentrations (&gt;10 nM) decelerates activation kinetics and slightly increases peak amplitude without affecting deactivation kinetics (By similarity). In vivo, does not cause death when intravenously injected into mice (By similarity). In rat models, through its activity on Cav2.1/CACNA1A, has an ameliorative effect on memory defects provoked by hyperstimulation of N-methyl-D-aspartate receptors (NMDARs) in the hippocampus (By similarity).</text>
</comment>
<comment type="subcellular location">
    <subcellularLocation>
        <location evidence="8">Secreted</location>
    </subcellularLocation>
</comment>
<comment type="tissue specificity">
    <text evidence="8">Expressed by the venom gland.</text>
</comment>
<comment type="domain">
    <text evidence="7">The presence of a 'disulfide through disulfide knot' structurally defines this protein as a knottin.</text>
</comment>
<comment type="miscellaneous">
    <text evidence="7">According to the nomenclature proposed by King and colleagues (2008), 'Gsp(267)' comes from the species name 'Geolycosa sp (strain A267TDLS2-KZARNA)' (PubMed:17888477). This species has been reclassified since that study, as indicated in the work of Oparin and colleagues (2016) (PMID:27412961).</text>
</comment>
<comment type="similarity">
    <text evidence="7">Belongs to the neurotoxin omega-lctx family.</text>
</comment>
<evidence type="ECO:0000250" key="1"/>
<evidence type="ECO:0000250" key="2">
    <source>
        <dbReference type="UniProtKB" id="A0A0G3F8Z3"/>
    </source>
</evidence>
<evidence type="ECO:0000250" key="3">
    <source>
        <dbReference type="UniProtKB" id="P0DRA9"/>
    </source>
</evidence>
<evidence type="ECO:0000250" key="4">
    <source>
        <dbReference type="UniProtKB" id="P85079"/>
    </source>
</evidence>
<evidence type="ECO:0000255" key="5"/>
<evidence type="ECO:0000303" key="6">
    <source>
    </source>
</evidence>
<evidence type="ECO:0000305" key="7"/>
<evidence type="ECO:0000305" key="8">
    <source>
    </source>
</evidence>
<sequence length="87" mass="10326">MKLSIFFVLFFIAIAYCQPEFLDDEEDEVEETLPVAEEGRERSCITWRNSCMHNDKGCCFPWSCVCWSQTVSRNSSRKEKKCQCRLW</sequence>
<reference key="1">
    <citation type="journal article" date="2007" name="Toxicon">
        <title>Omega-Lsp-IA, a novel modulator of P-type Ca(2+) channels.</title>
        <authorList>
            <person name="Pluzhnikov K.A."/>
            <person name="Vassilevski A."/>
            <person name="Korolkova Y."/>
            <person name="Fisyunov A."/>
            <person name="Iegorova O."/>
            <person name="Krishtal O."/>
            <person name="Grishin E."/>
        </authorList>
    </citation>
    <scope>NUCLEOTIDE SEQUENCE [MRNA]</scope>
    <source>
        <tissue>Venom gland</tissue>
    </source>
</reference>
<organism>
    <name type="scientific">Alopecosa marikovskyi</name>
    <name type="common">Wolf spider</name>
    <name type="synonym">Lycosa kazakhstanicus</name>
    <dbReference type="NCBI Taxonomy" id="2066572"/>
    <lineage>
        <taxon>Eukaryota</taxon>
        <taxon>Metazoa</taxon>
        <taxon>Ecdysozoa</taxon>
        <taxon>Arthropoda</taxon>
        <taxon>Chelicerata</taxon>
        <taxon>Arachnida</taxon>
        <taxon>Araneae</taxon>
        <taxon>Araneomorphae</taxon>
        <taxon>Entelegynae</taxon>
        <taxon>Lycosoidea</taxon>
        <taxon>Lycosidae</taxon>
        <taxon>Alopecosa</taxon>
    </lineage>
</organism>
<name>TLCOB_ALOMR</name>
<feature type="signal peptide" evidence="5">
    <location>
        <begin position="1"/>
        <end position="17"/>
    </location>
</feature>
<feature type="propeptide" id="PRO_0000388735" evidence="1">
    <location>
        <begin position="18"/>
        <end position="40"/>
    </location>
</feature>
<feature type="chain" id="PRO_0000388736" description="Omega-lycotoxin-Am1b">
    <location>
        <begin position="41"/>
        <end position="87"/>
    </location>
</feature>
<feature type="disulfide bond" evidence="2">
    <location>
        <begin position="44"/>
        <end position="59"/>
    </location>
</feature>
<feature type="disulfide bond" evidence="2">
    <location>
        <begin position="51"/>
        <end position="64"/>
    </location>
</feature>
<feature type="disulfide bond" evidence="2">
    <location>
        <begin position="58"/>
        <end position="84"/>
    </location>
</feature>
<feature type="disulfide bond" evidence="2">
    <location>
        <begin position="66"/>
        <end position="82"/>
    </location>
</feature>
<dbReference type="EMBL" id="EF187332">
    <property type="protein sequence ID" value="ABP68826.1"/>
    <property type="molecule type" value="mRNA"/>
</dbReference>
<dbReference type="ArachnoServer" id="AS000727">
    <property type="toxin name" value="omega-lycotoxin-Gsp2671b"/>
</dbReference>
<dbReference type="GO" id="GO:0005576">
    <property type="term" value="C:extracellular region"/>
    <property type="evidence" value="ECO:0007669"/>
    <property type="project" value="UniProtKB-SubCell"/>
</dbReference>
<dbReference type="GO" id="GO:0005246">
    <property type="term" value="F:calcium channel regulator activity"/>
    <property type="evidence" value="ECO:0007669"/>
    <property type="project" value="UniProtKB-KW"/>
</dbReference>
<dbReference type="GO" id="GO:0090729">
    <property type="term" value="F:toxin activity"/>
    <property type="evidence" value="ECO:0007669"/>
    <property type="project" value="UniProtKB-KW"/>
</dbReference>
<proteinExistence type="inferred from homology"/>